<comment type="function">
    <text evidence="1">IGPS catalyzes the conversion of PRFAR and glutamine to IGP, AICAR and glutamate. The HisF subunit catalyzes the cyclization activity that produces IGP and AICAR from PRFAR using the ammonia provided by the HisH subunit.</text>
</comment>
<comment type="catalytic activity">
    <reaction evidence="1">
        <text>5-[(5-phospho-1-deoxy-D-ribulos-1-ylimino)methylamino]-1-(5-phospho-beta-D-ribosyl)imidazole-4-carboxamide + L-glutamine = D-erythro-1-(imidazol-4-yl)glycerol 3-phosphate + 5-amino-1-(5-phospho-beta-D-ribosyl)imidazole-4-carboxamide + L-glutamate + H(+)</text>
        <dbReference type="Rhea" id="RHEA:24793"/>
        <dbReference type="ChEBI" id="CHEBI:15378"/>
        <dbReference type="ChEBI" id="CHEBI:29985"/>
        <dbReference type="ChEBI" id="CHEBI:58278"/>
        <dbReference type="ChEBI" id="CHEBI:58359"/>
        <dbReference type="ChEBI" id="CHEBI:58475"/>
        <dbReference type="ChEBI" id="CHEBI:58525"/>
        <dbReference type="EC" id="4.3.2.10"/>
    </reaction>
</comment>
<comment type="pathway">
    <text evidence="1">Amino-acid biosynthesis; L-histidine biosynthesis; L-histidine from 5-phospho-alpha-D-ribose 1-diphosphate: step 5/9.</text>
</comment>
<comment type="subunit">
    <text evidence="1">Heterodimer of HisH and HisF.</text>
</comment>
<comment type="subcellular location">
    <subcellularLocation>
        <location evidence="1">Cytoplasm</location>
    </subcellularLocation>
</comment>
<comment type="similarity">
    <text evidence="1">Belongs to the HisA/HisF family.</text>
</comment>
<sequence>MLAKRIIPCLDVRDGRVVKGINFEGLRDAGSILEQARFYNNELADELVFLDISASLESRRTTLEEVMKVSEEVFIPLTVGGGISSVERAREVFLHGADKVSVNTAAVNDPYLISRIAEKYGSQAVVVAIDIKKVGNHYMVHTHSGKQITQYEALEWALKVQELGAGEILLTSMDRDGTKEGYENNSLRMISTAVHIPVIASGGAGNLEHLYDGFSKGCADAALAASIFHFRHYSIRQAKEYLHKRGVAVRF</sequence>
<accession>Q3ATG0</accession>
<name>HIS6_CHLCH</name>
<organism>
    <name type="scientific">Chlorobium chlorochromatii (strain CaD3)</name>
    <dbReference type="NCBI Taxonomy" id="340177"/>
    <lineage>
        <taxon>Bacteria</taxon>
        <taxon>Pseudomonadati</taxon>
        <taxon>Chlorobiota</taxon>
        <taxon>Chlorobiia</taxon>
        <taxon>Chlorobiales</taxon>
        <taxon>Chlorobiaceae</taxon>
        <taxon>Chlorobium/Pelodictyon group</taxon>
        <taxon>Chlorobium</taxon>
    </lineage>
</organism>
<protein>
    <recommendedName>
        <fullName evidence="1">Imidazole glycerol phosphate synthase subunit HisF</fullName>
        <ecNumber evidence="1">4.3.2.10</ecNumber>
    </recommendedName>
    <alternativeName>
        <fullName evidence="1">IGP synthase cyclase subunit</fullName>
    </alternativeName>
    <alternativeName>
        <fullName evidence="1">IGP synthase subunit HisF</fullName>
    </alternativeName>
    <alternativeName>
        <fullName evidence="1">ImGP synthase subunit HisF</fullName>
        <shortName evidence="1">IGPS subunit HisF</shortName>
    </alternativeName>
</protein>
<reference key="1">
    <citation type="submission" date="2005-08" db="EMBL/GenBank/DDBJ databases">
        <title>Complete sequence of Chlorobium chlorochromatii CaD3.</title>
        <authorList>
            <consortium name="US DOE Joint Genome Institute"/>
            <person name="Copeland A."/>
            <person name="Lucas S."/>
            <person name="Lapidus A."/>
            <person name="Barry K."/>
            <person name="Detter J.C."/>
            <person name="Glavina T."/>
            <person name="Hammon N."/>
            <person name="Israni S."/>
            <person name="Pitluck S."/>
            <person name="Bryant D."/>
            <person name="Schmutz J."/>
            <person name="Larimer F."/>
            <person name="Land M."/>
            <person name="Kyrpides N."/>
            <person name="Ivanova N."/>
            <person name="Richardson P."/>
        </authorList>
    </citation>
    <scope>NUCLEOTIDE SEQUENCE [LARGE SCALE GENOMIC DNA]</scope>
    <source>
        <strain>CaD3</strain>
    </source>
</reference>
<feature type="chain" id="PRO_0000230126" description="Imidazole glycerol phosphate synthase subunit HisF">
    <location>
        <begin position="1"/>
        <end position="251"/>
    </location>
</feature>
<feature type="active site" evidence="1">
    <location>
        <position position="11"/>
    </location>
</feature>
<feature type="active site" evidence="1">
    <location>
        <position position="130"/>
    </location>
</feature>
<evidence type="ECO:0000255" key="1">
    <source>
        <dbReference type="HAMAP-Rule" id="MF_01013"/>
    </source>
</evidence>
<proteinExistence type="inferred from homology"/>
<keyword id="KW-0028">Amino-acid biosynthesis</keyword>
<keyword id="KW-0963">Cytoplasm</keyword>
<keyword id="KW-0368">Histidine biosynthesis</keyword>
<keyword id="KW-0456">Lyase</keyword>
<dbReference type="EC" id="4.3.2.10" evidence="1"/>
<dbReference type="EMBL" id="CP000108">
    <property type="protein sequence ID" value="ABB27715.1"/>
    <property type="molecule type" value="Genomic_DNA"/>
</dbReference>
<dbReference type="SMR" id="Q3ATG0"/>
<dbReference type="STRING" id="340177.Cag_0442"/>
<dbReference type="KEGG" id="cch:Cag_0442"/>
<dbReference type="eggNOG" id="COG0107">
    <property type="taxonomic scope" value="Bacteria"/>
</dbReference>
<dbReference type="HOGENOM" id="CLU_048577_4_0_10"/>
<dbReference type="OrthoDB" id="9781903at2"/>
<dbReference type="UniPathway" id="UPA00031">
    <property type="reaction ID" value="UER00010"/>
</dbReference>
<dbReference type="GO" id="GO:0005737">
    <property type="term" value="C:cytoplasm"/>
    <property type="evidence" value="ECO:0007669"/>
    <property type="project" value="UniProtKB-SubCell"/>
</dbReference>
<dbReference type="GO" id="GO:0000107">
    <property type="term" value="F:imidazoleglycerol-phosphate synthase activity"/>
    <property type="evidence" value="ECO:0007669"/>
    <property type="project" value="UniProtKB-UniRule"/>
</dbReference>
<dbReference type="GO" id="GO:0016829">
    <property type="term" value="F:lyase activity"/>
    <property type="evidence" value="ECO:0007669"/>
    <property type="project" value="UniProtKB-KW"/>
</dbReference>
<dbReference type="GO" id="GO:0000105">
    <property type="term" value="P:L-histidine biosynthetic process"/>
    <property type="evidence" value="ECO:0007669"/>
    <property type="project" value="UniProtKB-UniRule"/>
</dbReference>
<dbReference type="CDD" id="cd04731">
    <property type="entry name" value="HisF"/>
    <property type="match status" value="1"/>
</dbReference>
<dbReference type="FunFam" id="3.20.20.70:FF:000006">
    <property type="entry name" value="Imidazole glycerol phosphate synthase subunit HisF"/>
    <property type="match status" value="1"/>
</dbReference>
<dbReference type="Gene3D" id="3.20.20.70">
    <property type="entry name" value="Aldolase class I"/>
    <property type="match status" value="1"/>
</dbReference>
<dbReference type="HAMAP" id="MF_01013">
    <property type="entry name" value="HisF"/>
    <property type="match status" value="1"/>
</dbReference>
<dbReference type="InterPro" id="IPR013785">
    <property type="entry name" value="Aldolase_TIM"/>
</dbReference>
<dbReference type="InterPro" id="IPR006062">
    <property type="entry name" value="His_biosynth"/>
</dbReference>
<dbReference type="InterPro" id="IPR004651">
    <property type="entry name" value="HisF"/>
</dbReference>
<dbReference type="InterPro" id="IPR050064">
    <property type="entry name" value="IGPS_HisA/HisF"/>
</dbReference>
<dbReference type="InterPro" id="IPR011060">
    <property type="entry name" value="RibuloseP-bd_barrel"/>
</dbReference>
<dbReference type="NCBIfam" id="TIGR00735">
    <property type="entry name" value="hisF"/>
    <property type="match status" value="1"/>
</dbReference>
<dbReference type="PANTHER" id="PTHR21235:SF2">
    <property type="entry name" value="IMIDAZOLE GLYCEROL PHOSPHATE SYNTHASE HISHF"/>
    <property type="match status" value="1"/>
</dbReference>
<dbReference type="PANTHER" id="PTHR21235">
    <property type="entry name" value="IMIDAZOLE GLYCEROL PHOSPHATE SYNTHASE SUBUNIT HISF/H IGP SYNTHASE SUBUNIT HISF/H"/>
    <property type="match status" value="1"/>
</dbReference>
<dbReference type="Pfam" id="PF00977">
    <property type="entry name" value="His_biosynth"/>
    <property type="match status" value="1"/>
</dbReference>
<dbReference type="SUPFAM" id="SSF51366">
    <property type="entry name" value="Ribulose-phoshate binding barrel"/>
    <property type="match status" value="1"/>
</dbReference>
<gene>
    <name evidence="1" type="primary">hisF</name>
    <name type="ordered locus">Cag_0442</name>
</gene>